<evidence type="ECO:0000250" key="1">
    <source>
        <dbReference type="UniProtKB" id="Q57071"/>
    </source>
</evidence>
<evidence type="ECO:0000255" key="2">
    <source>
        <dbReference type="PROSITE-ProRule" id="PRU00416"/>
    </source>
</evidence>
<evidence type="ECO:0000255" key="3">
    <source>
        <dbReference type="PROSITE-ProRule" id="PRU00421"/>
    </source>
</evidence>
<evidence type="ECO:0000255" key="4">
    <source>
        <dbReference type="PROSITE-ProRule" id="PRU00426"/>
    </source>
</evidence>
<evidence type="ECO:0000305" key="5"/>
<gene>
    <name type="primary">ptsG</name>
    <name type="ordered locus">MPN_207</name>
    <name type="ORF">MP624</name>
</gene>
<keyword id="KW-1003">Cell membrane</keyword>
<keyword id="KW-0418">Kinase</keyword>
<keyword id="KW-0472">Membrane</keyword>
<keyword id="KW-0598">Phosphotransferase system</keyword>
<keyword id="KW-1185">Reference proteome</keyword>
<keyword id="KW-0762">Sugar transport</keyword>
<keyword id="KW-0808">Transferase</keyword>
<keyword id="KW-0812">Transmembrane</keyword>
<keyword id="KW-1133">Transmembrane helix</keyword>
<keyword id="KW-0813">Transport</keyword>
<dbReference type="EC" id="2.7.1.199" evidence="1"/>
<dbReference type="EMBL" id="U00089">
    <property type="protein sequence ID" value="AAB96272.1"/>
    <property type="molecule type" value="Genomic_DNA"/>
</dbReference>
<dbReference type="PIR" id="S73950">
    <property type="entry name" value="S73950"/>
</dbReference>
<dbReference type="RefSeq" id="NP_109895.1">
    <property type="nucleotide sequence ID" value="NC_000912.1"/>
</dbReference>
<dbReference type="RefSeq" id="WP_010874564.1">
    <property type="nucleotide sequence ID" value="NC_000912.1"/>
</dbReference>
<dbReference type="SMR" id="P75569"/>
<dbReference type="IntAct" id="P75569">
    <property type="interactions" value="4"/>
</dbReference>
<dbReference type="STRING" id="272634.MPN_207"/>
<dbReference type="EnsemblBacteria" id="AAB96272">
    <property type="protein sequence ID" value="AAB96272"/>
    <property type="gene ID" value="MPN_207"/>
</dbReference>
<dbReference type="KEGG" id="mpn:MPN_207"/>
<dbReference type="PATRIC" id="fig|272634.6.peg.226"/>
<dbReference type="HOGENOM" id="CLU_012312_1_1_14"/>
<dbReference type="OrthoDB" id="9764327at2"/>
<dbReference type="BioCyc" id="MPNE272634:G1GJ3-335-MONOMER"/>
<dbReference type="Proteomes" id="UP000000808">
    <property type="component" value="Chromosome"/>
</dbReference>
<dbReference type="GO" id="GO:0005886">
    <property type="term" value="C:plasma membrane"/>
    <property type="evidence" value="ECO:0007669"/>
    <property type="project" value="UniProtKB-SubCell"/>
</dbReference>
<dbReference type="GO" id="GO:0016301">
    <property type="term" value="F:kinase activity"/>
    <property type="evidence" value="ECO:0007669"/>
    <property type="project" value="UniProtKB-KW"/>
</dbReference>
<dbReference type="GO" id="GO:0008982">
    <property type="term" value="F:protein-N(PI)-phosphohistidine-sugar phosphotransferase activity"/>
    <property type="evidence" value="ECO:0007669"/>
    <property type="project" value="InterPro"/>
</dbReference>
<dbReference type="GO" id="GO:0090563">
    <property type="term" value="F:protein-phosphocysteine-sugar phosphotransferase activity"/>
    <property type="evidence" value="ECO:0007669"/>
    <property type="project" value="TreeGrafter"/>
</dbReference>
<dbReference type="GO" id="GO:0009401">
    <property type="term" value="P:phosphoenolpyruvate-dependent sugar phosphotransferase system"/>
    <property type="evidence" value="ECO:0007669"/>
    <property type="project" value="UniProtKB-KW"/>
</dbReference>
<dbReference type="CDD" id="cd00212">
    <property type="entry name" value="PTS_IIB_glc"/>
    <property type="match status" value="1"/>
</dbReference>
<dbReference type="Gene3D" id="2.70.70.10">
    <property type="entry name" value="Glucose Permease (Domain IIA)"/>
    <property type="match status" value="1"/>
</dbReference>
<dbReference type="Gene3D" id="3.30.1360.60">
    <property type="entry name" value="Glucose permease domain IIB"/>
    <property type="match status" value="1"/>
</dbReference>
<dbReference type="InterPro" id="IPR011055">
    <property type="entry name" value="Dup_hybrid_motif"/>
</dbReference>
<dbReference type="InterPro" id="IPR036878">
    <property type="entry name" value="Glu_permease_IIB"/>
</dbReference>
<dbReference type="InterPro" id="IPR018113">
    <property type="entry name" value="PTrfase_EIIB_Cys"/>
</dbReference>
<dbReference type="InterPro" id="IPR001127">
    <property type="entry name" value="PTS_EIIA_1_perm"/>
</dbReference>
<dbReference type="InterPro" id="IPR003352">
    <property type="entry name" value="PTS_EIIC"/>
</dbReference>
<dbReference type="InterPro" id="IPR013013">
    <property type="entry name" value="PTS_EIIC_1"/>
</dbReference>
<dbReference type="InterPro" id="IPR050429">
    <property type="entry name" value="PTS_Glucose_EIICBA"/>
</dbReference>
<dbReference type="InterPro" id="IPR001996">
    <property type="entry name" value="PTS_IIB_1"/>
</dbReference>
<dbReference type="NCBIfam" id="TIGR00826">
    <property type="entry name" value="EIIB_glc"/>
    <property type="match status" value="1"/>
</dbReference>
<dbReference type="NCBIfam" id="TIGR00830">
    <property type="entry name" value="PTBA"/>
    <property type="match status" value="1"/>
</dbReference>
<dbReference type="PANTHER" id="PTHR30009">
    <property type="entry name" value="CYTOCHROME C-TYPE SYNTHESIS PROTEIN AND PTS TRANSMEMBRANE COMPONENT"/>
    <property type="match status" value="1"/>
</dbReference>
<dbReference type="PANTHER" id="PTHR30009:SF20">
    <property type="entry name" value="PTS SYSTEM GLUCOSE-SPECIFIC EIICB COMPONENT-RELATED"/>
    <property type="match status" value="1"/>
</dbReference>
<dbReference type="Pfam" id="PF00358">
    <property type="entry name" value="PTS_EIIA_1"/>
    <property type="match status" value="1"/>
</dbReference>
<dbReference type="Pfam" id="PF00367">
    <property type="entry name" value="PTS_EIIB"/>
    <property type="match status" value="1"/>
</dbReference>
<dbReference type="Pfam" id="PF02378">
    <property type="entry name" value="PTS_EIIC"/>
    <property type="match status" value="2"/>
</dbReference>
<dbReference type="SUPFAM" id="SSF51261">
    <property type="entry name" value="Duplicated hybrid motif"/>
    <property type="match status" value="1"/>
</dbReference>
<dbReference type="SUPFAM" id="SSF55604">
    <property type="entry name" value="Glucose permease domain IIB"/>
    <property type="match status" value="1"/>
</dbReference>
<dbReference type="PROSITE" id="PS51093">
    <property type="entry name" value="PTS_EIIA_TYPE_1"/>
    <property type="match status" value="1"/>
</dbReference>
<dbReference type="PROSITE" id="PS00371">
    <property type="entry name" value="PTS_EIIA_TYPE_1_HIS"/>
    <property type="match status" value="1"/>
</dbReference>
<dbReference type="PROSITE" id="PS51098">
    <property type="entry name" value="PTS_EIIB_TYPE_1"/>
    <property type="match status" value="1"/>
</dbReference>
<dbReference type="PROSITE" id="PS51103">
    <property type="entry name" value="PTS_EIIC_TYPE_1"/>
    <property type="match status" value="1"/>
</dbReference>
<comment type="function">
    <text evidence="1">The phosphoenolpyruvate-dependent sugar phosphotransferase system (sugar PTS), a major carbohydrate active transport system, catalyzes the phosphorylation of incoming sugar substrates concomitantly with their translocation across the cell membrane. This system is involved in glucose transport.</text>
</comment>
<comment type="catalytic activity">
    <reaction evidence="1">
        <text>N(pros)-phospho-L-histidyl-[protein] + D-glucose(out) = D-glucose 6-phosphate(in) + L-histidyl-[protein]</text>
        <dbReference type="Rhea" id="RHEA:33367"/>
        <dbReference type="Rhea" id="RHEA-COMP:9745"/>
        <dbReference type="Rhea" id="RHEA-COMP:9746"/>
        <dbReference type="ChEBI" id="CHEBI:4167"/>
        <dbReference type="ChEBI" id="CHEBI:29979"/>
        <dbReference type="ChEBI" id="CHEBI:61548"/>
        <dbReference type="ChEBI" id="CHEBI:64837"/>
        <dbReference type="EC" id="2.7.1.199"/>
    </reaction>
</comment>
<comment type="subcellular location">
    <subcellularLocation>
        <location evidence="4">Cell membrane</location>
        <topology evidence="4">Multi-pass membrane protein</topology>
    </subcellularLocation>
</comment>
<comment type="domain">
    <text evidence="4">The EIIC domain forms the PTS system translocation channel and contains the specific substrate-binding site.</text>
</comment>
<comment type="domain">
    <text evidence="3">The EIIB domain is phosphorylated by phospho-EIIA on a cysteinyl or histidyl residue, depending on the transported sugar. Then, it transfers the phosphoryl group to the sugar substrate concomitantly with the sugar uptake processed by the EIIC domain.</text>
</comment>
<comment type="domain">
    <text evidence="2">The EIIA domain is phosphorylated by phospho-HPr on a histidyl residue. Then, it transfers the phosphoryl group to the EIIB domain.</text>
</comment>
<reference key="1">
    <citation type="journal article" date="1996" name="Nucleic Acids Res.">
        <title>Complete sequence analysis of the genome of the bacterium Mycoplasma pneumoniae.</title>
        <authorList>
            <person name="Himmelreich R."/>
            <person name="Hilbert H."/>
            <person name="Plagens H."/>
            <person name="Pirkl E."/>
            <person name="Li B.-C."/>
            <person name="Herrmann R."/>
        </authorList>
    </citation>
    <scope>NUCLEOTIDE SEQUENCE [LARGE SCALE GENOMIC DNA]</scope>
    <source>
        <strain>ATCC 29342 / M129 / Subtype 1</strain>
    </source>
</reference>
<organism>
    <name type="scientific">Mycoplasma pneumoniae (strain ATCC 29342 / M129 / Subtype 1)</name>
    <name type="common">Mycoplasmoides pneumoniae</name>
    <dbReference type="NCBI Taxonomy" id="272634"/>
    <lineage>
        <taxon>Bacteria</taxon>
        <taxon>Bacillati</taxon>
        <taxon>Mycoplasmatota</taxon>
        <taxon>Mycoplasmoidales</taxon>
        <taxon>Mycoplasmoidaceae</taxon>
        <taxon>Mycoplasmoides</taxon>
    </lineage>
</organism>
<protein>
    <recommendedName>
        <fullName evidence="1">PTS system glucose-specific EIICBA component</fullName>
        <ecNumber evidence="1">2.7.1.199</ecNumber>
    </recommendedName>
    <alternativeName>
        <fullName>EII-Glc/EIII-Glc</fullName>
    </alternativeName>
    <alternativeName>
        <fullName evidence="1">EIICBA-Glc</fullName>
    </alternativeName>
    <alternativeName>
        <fullName evidence="5">EIICBA-Glc 1</fullName>
    </alternativeName>
    <domain>
        <recommendedName>
            <fullName evidence="1">Glucose permease IIC component</fullName>
        </recommendedName>
        <alternativeName>
            <fullName evidence="1">PTS system glucose-specific EIIC component</fullName>
        </alternativeName>
    </domain>
    <domain>
        <recommendedName>
            <fullName evidence="1">Glucose-specific phosphotransferase enzyme IIB component</fullName>
        </recommendedName>
        <alternativeName>
            <fullName evidence="1">PTS system glucose-specific EIIB component</fullName>
        </alternativeName>
    </domain>
    <domain>
        <recommendedName>
            <fullName evidence="1">Glucose-specific phosphotransferase enzyme IIA component</fullName>
        </recommendedName>
        <alternativeName>
            <fullName evidence="1">PTS system glucose-specific EIIA component</fullName>
        </alternativeName>
    </domain>
</protein>
<sequence>MQIKAQDTGQQKKSCLLSNIRNKWKNRNRGSFRQWVGKLSNGLMIPIAVLPIAGIFLGVGDAIAGNAGDLTGLRYFGLFIKNGGDVVFANLPILFAIAIAITFSQDAGVAGFSAFVFWAAMNGFMSSLILPFDKAGKIITDTSTPIAGFKVLYNKSVPVHAIATTLGLRTLSTSVFGGIIVGALTSVLYKKFYAIRLPDVIGFFSGTRFVPIICFVVAIPVALILLMIWPAVSIGLNAIGTGLGFLGGKGYGANSLIFGYIERSLIPFGVHHAFYAPLWYTSAGGSLQEIVNQQVWIRPDFHLSDNYVARVIGWVDPNNSSMYIIPGALNGQNGSSTGNTMSKDLNGALSAYMSKESTAFLTWKDLVDGLTFKGNFDKMAENGLLDGSNKIWLGLNGSGILGKKLLLSDGNVYTITFKTFANTTPIAWSKGAQAVLPLNASSTIVNNPTALAAATQSNNNTNNIKLYPVNSFRVAVESLNPAQYSQGKFPFMLFGIPAAGVAMILAAPKDRRKEAASIVGSAAFTSFLTGITEPFEFTFLFLAPWLFYGVHAVLAAVSFWLMNILGANVGQTFSGSFIDFILYGALPDGRRWLANSYLVPIIGLFLAAIYFPTFYFLIKHFNLATPGRGGKLITKKEYLASKAAAKAEGVSGVAENFTQTQIEAGILLQAYGGKENIVELGACITKLRVTVKNPELVKEEPIKELGAAGVMRTTPTFFVAVFGTRAAVYKSAMQDIIQGKVNWEALQKVINTDQLAVEPKETTPPKEVMPVVQDEIVILSPVNGTLKSLNQVPDETFKQKLVGEGVAIVPSDGHFKAPGEAGVKTELAFPGGHAYIFDIDGIKVMLHIGIDTVQINAKKQPGEPLEVFDIKTKQGEYTKEKSESVVEVDLKKLSKKYNPITPFVVMKESLENFKLVPIRQRGEIKVGQPIFKLVYKKSQA</sequence>
<accession>P75569</accession>
<feature type="chain" id="PRO_0000186560" description="PTS system glucose-specific EIICBA component">
    <location>
        <begin position="1"/>
        <end position="940"/>
    </location>
</feature>
<feature type="transmembrane region" description="Helical" evidence="4">
    <location>
        <begin position="43"/>
        <end position="63"/>
    </location>
</feature>
<feature type="transmembrane region" description="Helical" evidence="4">
    <location>
        <begin position="83"/>
        <end position="103"/>
    </location>
</feature>
<feature type="transmembrane region" description="Helical" evidence="4">
    <location>
        <begin position="112"/>
        <end position="132"/>
    </location>
</feature>
<feature type="transmembrane region" description="Helical" evidence="4">
    <location>
        <begin position="175"/>
        <end position="195"/>
    </location>
</feature>
<feature type="transmembrane region" description="Helical" evidence="4">
    <location>
        <begin position="209"/>
        <end position="229"/>
    </location>
</feature>
<feature type="transmembrane region" description="Helical" evidence="4">
    <location>
        <begin position="487"/>
        <end position="507"/>
    </location>
</feature>
<feature type="transmembrane region" description="Helical" evidence="4">
    <location>
        <begin position="515"/>
        <end position="535"/>
    </location>
</feature>
<feature type="transmembrane region" description="Helical" evidence="4">
    <location>
        <begin position="537"/>
        <end position="557"/>
    </location>
</feature>
<feature type="transmembrane region" description="Helical" evidence="4">
    <location>
        <begin position="564"/>
        <end position="584"/>
    </location>
</feature>
<feature type="transmembrane region" description="Helical" evidence="4">
    <location>
        <begin position="598"/>
        <end position="618"/>
    </location>
</feature>
<feature type="domain" description="PTS EIIC type-1; first part" evidence="4">
    <location>
        <begin position="1"/>
        <end position="284"/>
    </location>
</feature>
<feature type="domain" description="PTS EIIC type-1; second part" evidence="4">
    <location>
        <begin position="479"/>
        <end position="630"/>
    </location>
</feature>
<feature type="domain" description="PTS EIIB type-1" evidence="3">
    <location>
        <begin position="661"/>
        <end position="743"/>
    </location>
</feature>
<feature type="domain" description="PTS EIIA type-1" evidence="2">
    <location>
        <begin position="794"/>
        <end position="907"/>
    </location>
</feature>
<feature type="region of interest" description="Unknown">
    <location>
        <begin position="285"/>
        <end position="478"/>
    </location>
</feature>
<feature type="active site" description="Phosphocysteine intermediate; for EIIB activity" evidence="3">
    <location>
        <position position="683"/>
    </location>
</feature>
<feature type="active site" description="Tele-phosphohistidine intermediate; for EIIA activity" evidence="2">
    <location>
        <position position="847"/>
    </location>
</feature>
<proteinExistence type="inferred from homology"/>
<name>PTG3C_MYCPN</name>